<keyword id="KW-0240">DNA-directed RNA polymerase</keyword>
<keyword id="KW-0548">Nucleotidyltransferase</keyword>
<keyword id="KW-1185">Reference proteome</keyword>
<keyword id="KW-0804">Transcription</keyword>
<keyword id="KW-0808">Transferase</keyword>
<gene>
    <name evidence="1" type="primary">rpoA</name>
    <name type="ordered locus">Daci_1047</name>
</gene>
<feature type="chain" id="PRO_1000091945" description="DNA-directed RNA polymerase subunit alpha">
    <location>
        <begin position="1"/>
        <end position="332"/>
    </location>
</feature>
<feature type="region of interest" description="Alpha N-terminal domain (alpha-NTD)" evidence="1">
    <location>
        <begin position="1"/>
        <end position="231"/>
    </location>
</feature>
<feature type="region of interest" description="Alpha C-terminal domain (alpha-CTD)" evidence="1">
    <location>
        <begin position="252"/>
        <end position="332"/>
    </location>
</feature>
<accession>A9BRX5</accession>
<evidence type="ECO:0000255" key="1">
    <source>
        <dbReference type="HAMAP-Rule" id="MF_00059"/>
    </source>
</evidence>
<sequence>MQTNLLKPKTINVEQLGHNRAKVVLEPFERGYGHTLGNALRRVLLSSMVGYAATEVTIAGVLHEYSSIDGVQEDVVNILLNLKGVVFKLHNRDEVTLSLRKDGEGVVTARDIQTPHDVEIINPDHVIANLSQGGKLDMQIKVEKGRGYVPGNVRRYGDESTKSIGRIVLDASFSPVKRVSYAVESARVEQRTDLDKLVVEIETNGAITAEDAVRASAKILVEQLAVFAQLDGGDIASVFDAPAGGRGAATAFDPILLRPVDELELTVRSANCLKAENIYYIGDLIQRTENELLKTPNLGRKSLNEIKEVLASRGLTLGMKLENWPPAGLEKR</sequence>
<comment type="function">
    <text evidence="1">DNA-dependent RNA polymerase catalyzes the transcription of DNA into RNA using the four ribonucleoside triphosphates as substrates.</text>
</comment>
<comment type="catalytic activity">
    <reaction evidence="1">
        <text>RNA(n) + a ribonucleoside 5'-triphosphate = RNA(n+1) + diphosphate</text>
        <dbReference type="Rhea" id="RHEA:21248"/>
        <dbReference type="Rhea" id="RHEA-COMP:14527"/>
        <dbReference type="Rhea" id="RHEA-COMP:17342"/>
        <dbReference type="ChEBI" id="CHEBI:33019"/>
        <dbReference type="ChEBI" id="CHEBI:61557"/>
        <dbReference type="ChEBI" id="CHEBI:140395"/>
        <dbReference type="EC" id="2.7.7.6"/>
    </reaction>
</comment>
<comment type="subunit">
    <text evidence="1">Homodimer. The RNAP catalytic core consists of 2 alpha, 1 beta, 1 beta' and 1 omega subunit. When a sigma factor is associated with the core the holoenzyme is formed, which can initiate transcription.</text>
</comment>
<comment type="domain">
    <text evidence="1">The N-terminal domain is essential for RNAP assembly and basal transcription, whereas the C-terminal domain is involved in interaction with transcriptional regulators and with upstream promoter elements.</text>
</comment>
<comment type="similarity">
    <text evidence="1">Belongs to the RNA polymerase alpha chain family.</text>
</comment>
<reference key="1">
    <citation type="submission" date="2007-11" db="EMBL/GenBank/DDBJ databases">
        <title>Complete sequence of Delftia acidovorans DSM 14801 / SPH-1.</title>
        <authorList>
            <person name="Copeland A."/>
            <person name="Lucas S."/>
            <person name="Lapidus A."/>
            <person name="Barry K."/>
            <person name="Glavina del Rio T."/>
            <person name="Dalin E."/>
            <person name="Tice H."/>
            <person name="Pitluck S."/>
            <person name="Lowry S."/>
            <person name="Clum A."/>
            <person name="Schmutz J."/>
            <person name="Larimer F."/>
            <person name="Land M."/>
            <person name="Hauser L."/>
            <person name="Kyrpides N."/>
            <person name="Kim E."/>
            <person name="Schleheck D."/>
            <person name="Richardson P."/>
        </authorList>
    </citation>
    <scope>NUCLEOTIDE SEQUENCE [LARGE SCALE GENOMIC DNA]</scope>
    <source>
        <strain>DSM 14801 / SPH-1</strain>
    </source>
</reference>
<dbReference type="EC" id="2.7.7.6" evidence="1"/>
<dbReference type="EMBL" id="CP000884">
    <property type="protein sequence ID" value="ABX33692.1"/>
    <property type="molecule type" value="Genomic_DNA"/>
</dbReference>
<dbReference type="RefSeq" id="WP_012202978.1">
    <property type="nucleotide sequence ID" value="NC_010002.1"/>
</dbReference>
<dbReference type="SMR" id="A9BRX5"/>
<dbReference type="STRING" id="398578.Daci_1047"/>
<dbReference type="KEGG" id="dac:Daci_1047"/>
<dbReference type="eggNOG" id="COG0202">
    <property type="taxonomic scope" value="Bacteria"/>
</dbReference>
<dbReference type="HOGENOM" id="CLU_053084_0_0_4"/>
<dbReference type="Proteomes" id="UP000000784">
    <property type="component" value="Chromosome"/>
</dbReference>
<dbReference type="GO" id="GO:0005737">
    <property type="term" value="C:cytoplasm"/>
    <property type="evidence" value="ECO:0007669"/>
    <property type="project" value="UniProtKB-ARBA"/>
</dbReference>
<dbReference type="GO" id="GO:0000428">
    <property type="term" value="C:DNA-directed RNA polymerase complex"/>
    <property type="evidence" value="ECO:0007669"/>
    <property type="project" value="UniProtKB-KW"/>
</dbReference>
<dbReference type="GO" id="GO:0003677">
    <property type="term" value="F:DNA binding"/>
    <property type="evidence" value="ECO:0007669"/>
    <property type="project" value="UniProtKB-UniRule"/>
</dbReference>
<dbReference type="GO" id="GO:0003899">
    <property type="term" value="F:DNA-directed RNA polymerase activity"/>
    <property type="evidence" value="ECO:0007669"/>
    <property type="project" value="UniProtKB-UniRule"/>
</dbReference>
<dbReference type="GO" id="GO:0046983">
    <property type="term" value="F:protein dimerization activity"/>
    <property type="evidence" value="ECO:0007669"/>
    <property type="project" value="InterPro"/>
</dbReference>
<dbReference type="GO" id="GO:0006351">
    <property type="term" value="P:DNA-templated transcription"/>
    <property type="evidence" value="ECO:0007669"/>
    <property type="project" value="UniProtKB-UniRule"/>
</dbReference>
<dbReference type="CDD" id="cd06928">
    <property type="entry name" value="RNAP_alpha_NTD"/>
    <property type="match status" value="1"/>
</dbReference>
<dbReference type="FunFam" id="1.10.150.20:FF:000001">
    <property type="entry name" value="DNA-directed RNA polymerase subunit alpha"/>
    <property type="match status" value="1"/>
</dbReference>
<dbReference type="FunFam" id="2.170.120.12:FF:000001">
    <property type="entry name" value="DNA-directed RNA polymerase subunit alpha"/>
    <property type="match status" value="1"/>
</dbReference>
<dbReference type="Gene3D" id="1.10.150.20">
    <property type="entry name" value="5' to 3' exonuclease, C-terminal subdomain"/>
    <property type="match status" value="1"/>
</dbReference>
<dbReference type="Gene3D" id="2.170.120.12">
    <property type="entry name" value="DNA-directed RNA polymerase, insert domain"/>
    <property type="match status" value="1"/>
</dbReference>
<dbReference type="Gene3D" id="3.30.1360.10">
    <property type="entry name" value="RNA polymerase, RBP11-like subunit"/>
    <property type="match status" value="1"/>
</dbReference>
<dbReference type="HAMAP" id="MF_00059">
    <property type="entry name" value="RNApol_bact_RpoA"/>
    <property type="match status" value="1"/>
</dbReference>
<dbReference type="InterPro" id="IPR011262">
    <property type="entry name" value="DNA-dir_RNA_pol_insert"/>
</dbReference>
<dbReference type="InterPro" id="IPR011263">
    <property type="entry name" value="DNA-dir_RNA_pol_RpoA/D/Rpb3"/>
</dbReference>
<dbReference type="InterPro" id="IPR011773">
    <property type="entry name" value="DNA-dir_RpoA"/>
</dbReference>
<dbReference type="InterPro" id="IPR036603">
    <property type="entry name" value="RBP11-like"/>
</dbReference>
<dbReference type="InterPro" id="IPR011260">
    <property type="entry name" value="RNAP_asu_C"/>
</dbReference>
<dbReference type="InterPro" id="IPR036643">
    <property type="entry name" value="RNApol_insert_sf"/>
</dbReference>
<dbReference type="NCBIfam" id="NF003513">
    <property type="entry name" value="PRK05182.1-2"/>
    <property type="match status" value="1"/>
</dbReference>
<dbReference type="NCBIfam" id="NF003519">
    <property type="entry name" value="PRK05182.2-5"/>
    <property type="match status" value="1"/>
</dbReference>
<dbReference type="NCBIfam" id="TIGR02027">
    <property type="entry name" value="rpoA"/>
    <property type="match status" value="1"/>
</dbReference>
<dbReference type="Pfam" id="PF01000">
    <property type="entry name" value="RNA_pol_A_bac"/>
    <property type="match status" value="1"/>
</dbReference>
<dbReference type="Pfam" id="PF03118">
    <property type="entry name" value="RNA_pol_A_CTD"/>
    <property type="match status" value="1"/>
</dbReference>
<dbReference type="Pfam" id="PF01193">
    <property type="entry name" value="RNA_pol_L"/>
    <property type="match status" value="1"/>
</dbReference>
<dbReference type="SMART" id="SM00662">
    <property type="entry name" value="RPOLD"/>
    <property type="match status" value="1"/>
</dbReference>
<dbReference type="SUPFAM" id="SSF47789">
    <property type="entry name" value="C-terminal domain of RNA polymerase alpha subunit"/>
    <property type="match status" value="1"/>
</dbReference>
<dbReference type="SUPFAM" id="SSF56553">
    <property type="entry name" value="Insert subdomain of RNA polymerase alpha subunit"/>
    <property type="match status" value="1"/>
</dbReference>
<dbReference type="SUPFAM" id="SSF55257">
    <property type="entry name" value="RBP11-like subunits of RNA polymerase"/>
    <property type="match status" value="1"/>
</dbReference>
<proteinExistence type="inferred from homology"/>
<name>RPOA_DELAS</name>
<protein>
    <recommendedName>
        <fullName evidence="1">DNA-directed RNA polymerase subunit alpha</fullName>
        <shortName evidence="1">RNAP subunit alpha</shortName>
        <ecNumber evidence="1">2.7.7.6</ecNumber>
    </recommendedName>
    <alternativeName>
        <fullName evidence="1">RNA polymerase subunit alpha</fullName>
    </alternativeName>
    <alternativeName>
        <fullName evidence="1">Transcriptase subunit alpha</fullName>
    </alternativeName>
</protein>
<organism>
    <name type="scientific">Delftia acidovorans (strain DSM 14801 / SPH-1)</name>
    <dbReference type="NCBI Taxonomy" id="398578"/>
    <lineage>
        <taxon>Bacteria</taxon>
        <taxon>Pseudomonadati</taxon>
        <taxon>Pseudomonadota</taxon>
        <taxon>Betaproteobacteria</taxon>
        <taxon>Burkholderiales</taxon>
        <taxon>Comamonadaceae</taxon>
        <taxon>Delftia</taxon>
    </lineage>
</organism>